<organism>
    <name type="scientific">Gluconacetobacter diazotrophicus (strain ATCC 49037 / DSM 5601 / CCUG 37298 / CIP 103539 / LMG 7603 / PAl5)</name>
    <dbReference type="NCBI Taxonomy" id="272568"/>
    <lineage>
        <taxon>Bacteria</taxon>
        <taxon>Pseudomonadati</taxon>
        <taxon>Pseudomonadota</taxon>
        <taxon>Alphaproteobacteria</taxon>
        <taxon>Acetobacterales</taxon>
        <taxon>Acetobacteraceae</taxon>
        <taxon>Gluconacetobacter</taxon>
    </lineage>
</organism>
<name>RL36_GLUDA</name>
<sequence>MKIRNSLKSAKVRDKDCRVVRRHGKVYVINKKNPRMKARQG</sequence>
<evidence type="ECO:0000255" key="1">
    <source>
        <dbReference type="HAMAP-Rule" id="MF_00251"/>
    </source>
</evidence>
<evidence type="ECO:0000305" key="2"/>
<accession>A9H8E4</accession>
<accession>B5ZI63</accession>
<reference key="1">
    <citation type="journal article" date="2009" name="BMC Genomics">
        <title>Complete genome sequence of the sugarcane nitrogen-fixing endophyte Gluconacetobacter diazotrophicus Pal5.</title>
        <authorList>
            <person name="Bertalan M."/>
            <person name="Albano R."/>
            <person name="de Padua V."/>
            <person name="Rouws L."/>
            <person name="Rojas C."/>
            <person name="Hemerly A."/>
            <person name="Teixeira K."/>
            <person name="Schwab S."/>
            <person name="Araujo J."/>
            <person name="Oliveira A."/>
            <person name="Franca L."/>
            <person name="Magalhaes V."/>
            <person name="Alqueres S."/>
            <person name="Cardoso A."/>
            <person name="Almeida W."/>
            <person name="Loureiro M.M."/>
            <person name="Nogueira E."/>
            <person name="Cidade D."/>
            <person name="Oliveira D."/>
            <person name="Simao T."/>
            <person name="Macedo J."/>
            <person name="Valadao A."/>
            <person name="Dreschsel M."/>
            <person name="Freitas F."/>
            <person name="Vidal M."/>
            <person name="Guedes H."/>
            <person name="Rodrigues E."/>
            <person name="Meneses C."/>
            <person name="Brioso P."/>
            <person name="Pozzer L."/>
            <person name="Figueiredo D."/>
            <person name="Montano H."/>
            <person name="Junior J."/>
            <person name="de Souza Filho G."/>
            <person name="Martin Quintana Flores V."/>
            <person name="Ferreira B."/>
            <person name="Branco A."/>
            <person name="Gonzalez P."/>
            <person name="Guillobel H."/>
            <person name="Lemos M."/>
            <person name="Seibel L."/>
            <person name="Macedo J."/>
            <person name="Alves-Ferreira M."/>
            <person name="Sachetto-Martins G."/>
            <person name="Coelho A."/>
            <person name="Santos E."/>
            <person name="Amaral G."/>
            <person name="Neves A."/>
            <person name="Pacheco A.B."/>
            <person name="Carvalho D."/>
            <person name="Lery L."/>
            <person name="Bisch P."/>
            <person name="Rossle S.C."/>
            <person name="Urmenyi T."/>
            <person name="Rael Pereira A."/>
            <person name="Silva R."/>
            <person name="Rondinelli E."/>
            <person name="von Kruger W."/>
            <person name="Martins O."/>
            <person name="Baldani J.I."/>
            <person name="Ferreira P.C."/>
        </authorList>
    </citation>
    <scope>NUCLEOTIDE SEQUENCE [LARGE SCALE GENOMIC DNA]</scope>
    <source>
        <strain>ATCC 49037 / DSM 5601 / CCUG 37298 / CIP 103539 / LMG 7603 / PAl5</strain>
    </source>
</reference>
<reference key="2">
    <citation type="journal article" date="2010" name="Stand. Genomic Sci.">
        <title>Two genome sequences of the same bacterial strain, Gluconacetobacter diazotrophicus PAl 5, suggest a new standard in genome sequence submission.</title>
        <authorList>
            <person name="Giongo A."/>
            <person name="Tyler H.L."/>
            <person name="Zipperer U.N."/>
            <person name="Triplett E.W."/>
        </authorList>
    </citation>
    <scope>NUCLEOTIDE SEQUENCE [LARGE SCALE GENOMIC DNA]</scope>
    <source>
        <strain>ATCC 49037 / DSM 5601 / CCUG 37298 / CIP 103539 / LMG 7603 / PAl5</strain>
    </source>
</reference>
<gene>
    <name evidence="1" type="primary">rpmJ</name>
    <name type="ordered locus">GDI0579</name>
    <name type="ordered locus">Gdia_1421</name>
</gene>
<comment type="similarity">
    <text evidence="1">Belongs to the bacterial ribosomal protein bL36 family.</text>
</comment>
<feature type="chain" id="PRO_1000078475" description="Large ribosomal subunit protein bL36">
    <location>
        <begin position="1"/>
        <end position="41"/>
    </location>
</feature>
<proteinExistence type="inferred from homology"/>
<protein>
    <recommendedName>
        <fullName evidence="1">Large ribosomal subunit protein bL36</fullName>
    </recommendedName>
    <alternativeName>
        <fullName evidence="2">50S ribosomal protein L36</fullName>
    </alternativeName>
</protein>
<keyword id="KW-1185">Reference proteome</keyword>
<keyword id="KW-0687">Ribonucleoprotein</keyword>
<keyword id="KW-0689">Ribosomal protein</keyword>
<dbReference type="EMBL" id="AM889285">
    <property type="protein sequence ID" value="CAP54522.1"/>
    <property type="molecule type" value="Genomic_DNA"/>
</dbReference>
<dbReference type="EMBL" id="CP001189">
    <property type="protein sequence ID" value="ACI51201.1"/>
    <property type="molecule type" value="Genomic_DNA"/>
</dbReference>
<dbReference type="SMR" id="A9H8E4"/>
<dbReference type="STRING" id="272568.GDI0579"/>
<dbReference type="KEGG" id="gdi:GDI0579"/>
<dbReference type="KEGG" id="gdj:Gdia_1421"/>
<dbReference type="eggNOG" id="COG0257">
    <property type="taxonomic scope" value="Bacteria"/>
</dbReference>
<dbReference type="HOGENOM" id="CLU_135723_3_2_5"/>
<dbReference type="Proteomes" id="UP000001176">
    <property type="component" value="Chromosome"/>
</dbReference>
<dbReference type="GO" id="GO:1990904">
    <property type="term" value="C:ribonucleoprotein complex"/>
    <property type="evidence" value="ECO:0007669"/>
    <property type="project" value="UniProtKB-KW"/>
</dbReference>
<dbReference type="GO" id="GO:0005840">
    <property type="term" value="C:ribosome"/>
    <property type="evidence" value="ECO:0007669"/>
    <property type="project" value="UniProtKB-KW"/>
</dbReference>
<dbReference type="GO" id="GO:0003735">
    <property type="term" value="F:structural constituent of ribosome"/>
    <property type="evidence" value="ECO:0007669"/>
    <property type="project" value="InterPro"/>
</dbReference>
<dbReference type="GO" id="GO:0006412">
    <property type="term" value="P:translation"/>
    <property type="evidence" value="ECO:0007669"/>
    <property type="project" value="UniProtKB-UniRule"/>
</dbReference>
<dbReference type="HAMAP" id="MF_00251">
    <property type="entry name" value="Ribosomal_bL36"/>
    <property type="match status" value="1"/>
</dbReference>
<dbReference type="InterPro" id="IPR000473">
    <property type="entry name" value="Ribosomal_bL36"/>
</dbReference>
<dbReference type="InterPro" id="IPR035977">
    <property type="entry name" value="Ribosomal_bL36_sp"/>
</dbReference>
<dbReference type="InterPro" id="IPR047621">
    <property type="entry name" value="Ribosomal_L36_bact"/>
</dbReference>
<dbReference type="NCBIfam" id="NF002021">
    <property type="entry name" value="PRK00831.1"/>
    <property type="match status" value="1"/>
</dbReference>
<dbReference type="NCBIfam" id="TIGR01022">
    <property type="entry name" value="rpmJ_bact"/>
    <property type="match status" value="1"/>
</dbReference>
<dbReference type="PANTHER" id="PTHR47781">
    <property type="entry name" value="50S RIBOSOMAL PROTEIN L36 2"/>
    <property type="match status" value="1"/>
</dbReference>
<dbReference type="PANTHER" id="PTHR47781:SF1">
    <property type="entry name" value="LARGE RIBOSOMAL SUBUNIT PROTEIN BL36B"/>
    <property type="match status" value="1"/>
</dbReference>
<dbReference type="Pfam" id="PF00444">
    <property type="entry name" value="Ribosomal_L36"/>
    <property type="match status" value="1"/>
</dbReference>
<dbReference type="SUPFAM" id="SSF57840">
    <property type="entry name" value="Ribosomal protein L36"/>
    <property type="match status" value="1"/>
</dbReference>